<reference key="1">
    <citation type="submission" date="2006-01" db="EMBL/GenBank/DDBJ databases">
        <title>Complete sequence of Anaeromyxobacter dehalogenans 2CP-C.</title>
        <authorList>
            <person name="Copeland A."/>
            <person name="Lucas S."/>
            <person name="Lapidus A."/>
            <person name="Barry K."/>
            <person name="Detter J.C."/>
            <person name="Glavina T."/>
            <person name="Hammon N."/>
            <person name="Israni S."/>
            <person name="Pitluck S."/>
            <person name="Brettin T."/>
            <person name="Bruce D."/>
            <person name="Han C."/>
            <person name="Tapia R."/>
            <person name="Gilna P."/>
            <person name="Kiss H."/>
            <person name="Schmutz J."/>
            <person name="Larimer F."/>
            <person name="Land M."/>
            <person name="Kyrpides N."/>
            <person name="Anderson I."/>
            <person name="Sanford R.A."/>
            <person name="Ritalahti K.M."/>
            <person name="Thomas H.S."/>
            <person name="Kirby J.R."/>
            <person name="Zhulin I.B."/>
            <person name="Loeffler F.E."/>
            <person name="Richardson P."/>
        </authorList>
    </citation>
    <scope>NUCLEOTIDE SEQUENCE [LARGE SCALE GENOMIC DNA]</scope>
    <source>
        <strain>2CP-C</strain>
    </source>
</reference>
<gene>
    <name evidence="1" type="primary">murC</name>
    <name type="ordered locus">Adeh_3772</name>
</gene>
<dbReference type="EC" id="6.3.2.8" evidence="1"/>
<dbReference type="EMBL" id="CP000251">
    <property type="protein sequence ID" value="ABC83538.1"/>
    <property type="molecule type" value="Genomic_DNA"/>
</dbReference>
<dbReference type="RefSeq" id="WP_011422820.1">
    <property type="nucleotide sequence ID" value="NC_007760.1"/>
</dbReference>
<dbReference type="SMR" id="Q2IG30"/>
<dbReference type="STRING" id="290397.Adeh_3772"/>
<dbReference type="KEGG" id="ade:Adeh_3772"/>
<dbReference type="eggNOG" id="COG0773">
    <property type="taxonomic scope" value="Bacteria"/>
</dbReference>
<dbReference type="HOGENOM" id="CLU_028104_2_2_7"/>
<dbReference type="OrthoDB" id="9804126at2"/>
<dbReference type="UniPathway" id="UPA00219"/>
<dbReference type="Proteomes" id="UP000001935">
    <property type="component" value="Chromosome"/>
</dbReference>
<dbReference type="GO" id="GO:0005737">
    <property type="term" value="C:cytoplasm"/>
    <property type="evidence" value="ECO:0007669"/>
    <property type="project" value="UniProtKB-SubCell"/>
</dbReference>
<dbReference type="GO" id="GO:0005524">
    <property type="term" value="F:ATP binding"/>
    <property type="evidence" value="ECO:0007669"/>
    <property type="project" value="UniProtKB-UniRule"/>
</dbReference>
<dbReference type="GO" id="GO:0008763">
    <property type="term" value="F:UDP-N-acetylmuramate-L-alanine ligase activity"/>
    <property type="evidence" value="ECO:0007669"/>
    <property type="project" value="UniProtKB-UniRule"/>
</dbReference>
<dbReference type="GO" id="GO:0051301">
    <property type="term" value="P:cell division"/>
    <property type="evidence" value="ECO:0007669"/>
    <property type="project" value="UniProtKB-KW"/>
</dbReference>
<dbReference type="GO" id="GO:0071555">
    <property type="term" value="P:cell wall organization"/>
    <property type="evidence" value="ECO:0007669"/>
    <property type="project" value="UniProtKB-KW"/>
</dbReference>
<dbReference type="GO" id="GO:0009252">
    <property type="term" value="P:peptidoglycan biosynthetic process"/>
    <property type="evidence" value="ECO:0007669"/>
    <property type="project" value="UniProtKB-UniRule"/>
</dbReference>
<dbReference type="GO" id="GO:0008360">
    <property type="term" value="P:regulation of cell shape"/>
    <property type="evidence" value="ECO:0007669"/>
    <property type="project" value="UniProtKB-KW"/>
</dbReference>
<dbReference type="Gene3D" id="3.90.190.20">
    <property type="entry name" value="Mur ligase, C-terminal domain"/>
    <property type="match status" value="1"/>
</dbReference>
<dbReference type="Gene3D" id="3.40.1190.10">
    <property type="entry name" value="Mur-like, catalytic domain"/>
    <property type="match status" value="1"/>
</dbReference>
<dbReference type="Gene3D" id="3.40.50.720">
    <property type="entry name" value="NAD(P)-binding Rossmann-like Domain"/>
    <property type="match status" value="1"/>
</dbReference>
<dbReference type="HAMAP" id="MF_00046">
    <property type="entry name" value="MurC"/>
    <property type="match status" value="1"/>
</dbReference>
<dbReference type="InterPro" id="IPR036565">
    <property type="entry name" value="Mur-like_cat_sf"/>
</dbReference>
<dbReference type="InterPro" id="IPR004101">
    <property type="entry name" value="Mur_ligase_C"/>
</dbReference>
<dbReference type="InterPro" id="IPR036615">
    <property type="entry name" value="Mur_ligase_C_dom_sf"/>
</dbReference>
<dbReference type="InterPro" id="IPR013221">
    <property type="entry name" value="Mur_ligase_cen"/>
</dbReference>
<dbReference type="InterPro" id="IPR000713">
    <property type="entry name" value="Mur_ligase_N"/>
</dbReference>
<dbReference type="InterPro" id="IPR050061">
    <property type="entry name" value="MurCDEF_pg_biosynth"/>
</dbReference>
<dbReference type="InterPro" id="IPR005758">
    <property type="entry name" value="UDP-N-AcMur_Ala_ligase_MurC"/>
</dbReference>
<dbReference type="NCBIfam" id="TIGR01082">
    <property type="entry name" value="murC"/>
    <property type="match status" value="1"/>
</dbReference>
<dbReference type="PANTHER" id="PTHR43445:SF3">
    <property type="entry name" value="UDP-N-ACETYLMURAMATE--L-ALANINE LIGASE"/>
    <property type="match status" value="1"/>
</dbReference>
<dbReference type="PANTHER" id="PTHR43445">
    <property type="entry name" value="UDP-N-ACETYLMURAMATE--L-ALANINE LIGASE-RELATED"/>
    <property type="match status" value="1"/>
</dbReference>
<dbReference type="Pfam" id="PF01225">
    <property type="entry name" value="Mur_ligase"/>
    <property type="match status" value="1"/>
</dbReference>
<dbReference type="Pfam" id="PF02875">
    <property type="entry name" value="Mur_ligase_C"/>
    <property type="match status" value="1"/>
</dbReference>
<dbReference type="Pfam" id="PF08245">
    <property type="entry name" value="Mur_ligase_M"/>
    <property type="match status" value="1"/>
</dbReference>
<dbReference type="SUPFAM" id="SSF51984">
    <property type="entry name" value="MurCD N-terminal domain"/>
    <property type="match status" value="1"/>
</dbReference>
<dbReference type="SUPFAM" id="SSF53623">
    <property type="entry name" value="MurD-like peptide ligases, catalytic domain"/>
    <property type="match status" value="1"/>
</dbReference>
<dbReference type="SUPFAM" id="SSF53244">
    <property type="entry name" value="MurD-like peptide ligases, peptide-binding domain"/>
    <property type="match status" value="1"/>
</dbReference>
<comment type="function">
    <text evidence="1">Cell wall formation.</text>
</comment>
<comment type="catalytic activity">
    <reaction evidence="1">
        <text>UDP-N-acetyl-alpha-D-muramate + L-alanine + ATP = UDP-N-acetyl-alpha-D-muramoyl-L-alanine + ADP + phosphate + H(+)</text>
        <dbReference type="Rhea" id="RHEA:23372"/>
        <dbReference type="ChEBI" id="CHEBI:15378"/>
        <dbReference type="ChEBI" id="CHEBI:30616"/>
        <dbReference type="ChEBI" id="CHEBI:43474"/>
        <dbReference type="ChEBI" id="CHEBI:57972"/>
        <dbReference type="ChEBI" id="CHEBI:70757"/>
        <dbReference type="ChEBI" id="CHEBI:83898"/>
        <dbReference type="ChEBI" id="CHEBI:456216"/>
        <dbReference type="EC" id="6.3.2.8"/>
    </reaction>
</comment>
<comment type="pathway">
    <text evidence="1">Cell wall biogenesis; peptidoglycan biosynthesis.</text>
</comment>
<comment type="subcellular location">
    <subcellularLocation>
        <location evidence="1">Cytoplasm</location>
    </subcellularLocation>
</comment>
<comment type="similarity">
    <text evidence="1">Belongs to the MurCDEF family.</text>
</comment>
<feature type="chain" id="PRO_0000242541" description="UDP-N-acetylmuramate--L-alanine ligase">
    <location>
        <begin position="1"/>
        <end position="458"/>
    </location>
</feature>
<feature type="binding site" evidence="1">
    <location>
        <begin position="115"/>
        <end position="121"/>
    </location>
    <ligand>
        <name>ATP</name>
        <dbReference type="ChEBI" id="CHEBI:30616"/>
    </ligand>
</feature>
<protein>
    <recommendedName>
        <fullName evidence="1">UDP-N-acetylmuramate--L-alanine ligase</fullName>
        <ecNumber evidence="1">6.3.2.8</ecNumber>
    </recommendedName>
    <alternativeName>
        <fullName evidence="1">UDP-N-acetylmuramoyl-L-alanine synthetase</fullName>
    </alternativeName>
</protein>
<accession>Q2IG30</accession>
<name>MURC_ANADE</name>
<sequence>MSLFRSRQAKIHFVGVGGIGMSGIAEVLLNLGYTVSGSDLRESETTRRLAGLGGHISYGHAAENVLQVDVVVISSAVKRDNPEVLEARRRKIPVIPRAEMLAELMRLKYGVAIAGSHGKTTTTSMAAHLLAHAGLDPTAVVGGKVNAFGSNAKLGKGDYMVVEADESDGSFLRIPPTIAIVTNIDPEHLDHWKTPDALRRGFVDFVNRVPFYGLAILCIDHPTVQSILPDVEKRVVTYGESHQADYRAEAIELSGHAVRFDAFRRDEALGRFEVAMVGRHNALNALAVIALGDEMGIPPLVTREALRSFQGVQRRFTVRGEVAGVTVVDDYGHHPAEVKATLQGAREAFKRRVVCLFQPHRYTRTRDLMAEFATAFNDADVLLLTDIYAAGEEPIPGATAANLAEAIRAWGHRDVTVVPRAELARAARERIRPGDLVLTLGAGDVTAAGPELLALLER</sequence>
<proteinExistence type="inferred from homology"/>
<organism>
    <name type="scientific">Anaeromyxobacter dehalogenans (strain 2CP-C)</name>
    <dbReference type="NCBI Taxonomy" id="290397"/>
    <lineage>
        <taxon>Bacteria</taxon>
        <taxon>Pseudomonadati</taxon>
        <taxon>Myxococcota</taxon>
        <taxon>Myxococcia</taxon>
        <taxon>Myxococcales</taxon>
        <taxon>Cystobacterineae</taxon>
        <taxon>Anaeromyxobacteraceae</taxon>
        <taxon>Anaeromyxobacter</taxon>
    </lineage>
</organism>
<evidence type="ECO:0000255" key="1">
    <source>
        <dbReference type="HAMAP-Rule" id="MF_00046"/>
    </source>
</evidence>
<keyword id="KW-0067">ATP-binding</keyword>
<keyword id="KW-0131">Cell cycle</keyword>
<keyword id="KW-0132">Cell division</keyword>
<keyword id="KW-0133">Cell shape</keyword>
<keyword id="KW-0961">Cell wall biogenesis/degradation</keyword>
<keyword id="KW-0963">Cytoplasm</keyword>
<keyword id="KW-0436">Ligase</keyword>
<keyword id="KW-0547">Nucleotide-binding</keyword>
<keyword id="KW-0573">Peptidoglycan synthesis</keyword>
<keyword id="KW-1185">Reference proteome</keyword>